<gene>
    <name evidence="1" type="primary">gpmI</name>
    <name type="ordered locus">Ecok1_35950</name>
    <name type="ORF">APECO1_2843</name>
</gene>
<comment type="function">
    <text evidence="1">Catalyzes the interconversion of 2-phosphoglycerate and 3-phosphoglycerate.</text>
</comment>
<comment type="catalytic activity">
    <reaction evidence="1">
        <text>(2R)-2-phosphoglycerate = (2R)-3-phosphoglycerate</text>
        <dbReference type="Rhea" id="RHEA:15901"/>
        <dbReference type="ChEBI" id="CHEBI:58272"/>
        <dbReference type="ChEBI" id="CHEBI:58289"/>
        <dbReference type="EC" id="5.4.2.12"/>
    </reaction>
</comment>
<comment type="cofactor">
    <cofactor evidence="1">
        <name>Mn(2+)</name>
        <dbReference type="ChEBI" id="CHEBI:29035"/>
    </cofactor>
    <text evidence="1">Binds 2 manganese ions per subunit.</text>
</comment>
<comment type="pathway">
    <text evidence="1">Carbohydrate degradation; glycolysis; pyruvate from D-glyceraldehyde 3-phosphate: step 3/5.</text>
</comment>
<comment type="subunit">
    <text evidence="1">Monomer.</text>
</comment>
<comment type="similarity">
    <text evidence="1">Belongs to the BPG-independent phosphoglycerate mutase family.</text>
</comment>
<name>GPMI_ECOK1</name>
<organism>
    <name type="scientific">Escherichia coli O1:K1 / APEC</name>
    <dbReference type="NCBI Taxonomy" id="405955"/>
    <lineage>
        <taxon>Bacteria</taxon>
        <taxon>Pseudomonadati</taxon>
        <taxon>Pseudomonadota</taxon>
        <taxon>Gammaproteobacteria</taxon>
        <taxon>Enterobacterales</taxon>
        <taxon>Enterobacteriaceae</taxon>
        <taxon>Escherichia</taxon>
    </lineage>
</organism>
<protein>
    <recommendedName>
        <fullName evidence="1">2,3-bisphosphoglycerate-independent phosphoglycerate mutase</fullName>
        <shortName evidence="1">BPG-independent PGAM</shortName>
        <shortName evidence="1">Phosphoglyceromutase</shortName>
        <shortName evidence="1">iPGM</shortName>
        <ecNumber evidence="1">5.4.2.12</ecNumber>
    </recommendedName>
</protein>
<accession>A1AHE9</accession>
<feature type="chain" id="PRO_1000063962" description="2,3-bisphosphoglycerate-independent phosphoglycerate mutase">
    <location>
        <begin position="1"/>
        <end position="514"/>
    </location>
</feature>
<feature type="active site" description="Phosphoserine intermediate" evidence="1">
    <location>
        <position position="64"/>
    </location>
</feature>
<feature type="binding site" evidence="1">
    <location>
        <position position="14"/>
    </location>
    <ligand>
        <name>Mn(2+)</name>
        <dbReference type="ChEBI" id="CHEBI:29035"/>
        <label>2</label>
    </ligand>
</feature>
<feature type="binding site" evidence="1">
    <location>
        <position position="64"/>
    </location>
    <ligand>
        <name>Mn(2+)</name>
        <dbReference type="ChEBI" id="CHEBI:29035"/>
        <label>2</label>
    </ligand>
</feature>
<feature type="binding site" evidence="1">
    <location>
        <position position="125"/>
    </location>
    <ligand>
        <name>substrate</name>
    </ligand>
</feature>
<feature type="binding site" evidence="1">
    <location>
        <begin position="155"/>
        <end position="156"/>
    </location>
    <ligand>
        <name>substrate</name>
    </ligand>
</feature>
<feature type="binding site" evidence="1">
    <location>
        <position position="187"/>
    </location>
    <ligand>
        <name>substrate</name>
    </ligand>
</feature>
<feature type="binding site" evidence="1">
    <location>
        <position position="193"/>
    </location>
    <ligand>
        <name>substrate</name>
    </ligand>
</feature>
<feature type="binding site" evidence="1">
    <location>
        <begin position="263"/>
        <end position="266"/>
    </location>
    <ligand>
        <name>substrate</name>
    </ligand>
</feature>
<feature type="binding site" evidence="1">
    <location>
        <position position="336"/>
    </location>
    <ligand>
        <name>substrate</name>
    </ligand>
</feature>
<feature type="binding site" evidence="1">
    <location>
        <position position="403"/>
    </location>
    <ligand>
        <name>Mn(2+)</name>
        <dbReference type="ChEBI" id="CHEBI:29035"/>
        <label>1</label>
    </ligand>
</feature>
<feature type="binding site" evidence="1">
    <location>
        <position position="407"/>
    </location>
    <ligand>
        <name>Mn(2+)</name>
        <dbReference type="ChEBI" id="CHEBI:29035"/>
        <label>1</label>
    </ligand>
</feature>
<feature type="binding site" evidence="1">
    <location>
        <position position="444"/>
    </location>
    <ligand>
        <name>Mn(2+)</name>
        <dbReference type="ChEBI" id="CHEBI:29035"/>
        <label>2</label>
    </ligand>
</feature>
<feature type="binding site" evidence="1">
    <location>
        <position position="445"/>
    </location>
    <ligand>
        <name>Mn(2+)</name>
        <dbReference type="ChEBI" id="CHEBI:29035"/>
        <label>2</label>
    </ligand>
</feature>
<feature type="binding site" evidence="1">
    <location>
        <position position="463"/>
    </location>
    <ligand>
        <name>Mn(2+)</name>
        <dbReference type="ChEBI" id="CHEBI:29035"/>
        <label>1</label>
    </ligand>
</feature>
<dbReference type="EC" id="5.4.2.12" evidence="1"/>
<dbReference type="EMBL" id="CP000468">
    <property type="protein sequence ID" value="ABJ03089.1"/>
    <property type="molecule type" value="Genomic_DNA"/>
</dbReference>
<dbReference type="SMR" id="A1AHE9"/>
<dbReference type="KEGG" id="ecv:APECO1_2843"/>
<dbReference type="HOGENOM" id="CLU_026099_2_0_6"/>
<dbReference type="UniPathway" id="UPA00109">
    <property type="reaction ID" value="UER00186"/>
</dbReference>
<dbReference type="Proteomes" id="UP000008216">
    <property type="component" value="Chromosome"/>
</dbReference>
<dbReference type="GO" id="GO:0005829">
    <property type="term" value="C:cytosol"/>
    <property type="evidence" value="ECO:0007669"/>
    <property type="project" value="TreeGrafter"/>
</dbReference>
<dbReference type="GO" id="GO:0030145">
    <property type="term" value="F:manganese ion binding"/>
    <property type="evidence" value="ECO:0007669"/>
    <property type="project" value="UniProtKB-UniRule"/>
</dbReference>
<dbReference type="GO" id="GO:0004619">
    <property type="term" value="F:phosphoglycerate mutase activity"/>
    <property type="evidence" value="ECO:0007669"/>
    <property type="project" value="UniProtKB-EC"/>
</dbReference>
<dbReference type="GO" id="GO:0006007">
    <property type="term" value="P:glucose catabolic process"/>
    <property type="evidence" value="ECO:0007669"/>
    <property type="project" value="InterPro"/>
</dbReference>
<dbReference type="GO" id="GO:0006096">
    <property type="term" value="P:glycolytic process"/>
    <property type="evidence" value="ECO:0007669"/>
    <property type="project" value="UniProtKB-UniRule"/>
</dbReference>
<dbReference type="CDD" id="cd16010">
    <property type="entry name" value="iPGM"/>
    <property type="match status" value="1"/>
</dbReference>
<dbReference type="FunFam" id="3.40.1450.10:FF:000001">
    <property type="entry name" value="2,3-bisphosphoglycerate-independent phosphoglycerate mutase"/>
    <property type="match status" value="1"/>
</dbReference>
<dbReference type="FunFam" id="3.40.720.10:FF:000001">
    <property type="entry name" value="2,3-bisphosphoglycerate-independent phosphoglycerate mutase"/>
    <property type="match status" value="1"/>
</dbReference>
<dbReference type="Gene3D" id="3.40.720.10">
    <property type="entry name" value="Alkaline Phosphatase, subunit A"/>
    <property type="match status" value="1"/>
</dbReference>
<dbReference type="Gene3D" id="3.40.1450.10">
    <property type="entry name" value="BPG-independent phosphoglycerate mutase, domain B"/>
    <property type="match status" value="1"/>
</dbReference>
<dbReference type="HAMAP" id="MF_01038">
    <property type="entry name" value="GpmI"/>
    <property type="match status" value="1"/>
</dbReference>
<dbReference type="InterPro" id="IPR017850">
    <property type="entry name" value="Alkaline_phosphatase_core_sf"/>
</dbReference>
<dbReference type="InterPro" id="IPR011258">
    <property type="entry name" value="BPG-indep_PGM_N"/>
</dbReference>
<dbReference type="InterPro" id="IPR006124">
    <property type="entry name" value="Metalloenzyme"/>
</dbReference>
<dbReference type="InterPro" id="IPR036646">
    <property type="entry name" value="PGAM_B_sf"/>
</dbReference>
<dbReference type="InterPro" id="IPR005995">
    <property type="entry name" value="Pgm_bpd_ind"/>
</dbReference>
<dbReference type="NCBIfam" id="TIGR01307">
    <property type="entry name" value="pgm_bpd_ind"/>
    <property type="match status" value="1"/>
</dbReference>
<dbReference type="NCBIfam" id="NF003897">
    <property type="entry name" value="PRK05434.1-5"/>
    <property type="match status" value="1"/>
</dbReference>
<dbReference type="PANTHER" id="PTHR31637">
    <property type="entry name" value="2,3-BISPHOSPHOGLYCERATE-INDEPENDENT PHOSPHOGLYCERATE MUTASE"/>
    <property type="match status" value="1"/>
</dbReference>
<dbReference type="PANTHER" id="PTHR31637:SF0">
    <property type="entry name" value="2,3-BISPHOSPHOGLYCERATE-INDEPENDENT PHOSPHOGLYCERATE MUTASE"/>
    <property type="match status" value="1"/>
</dbReference>
<dbReference type="Pfam" id="PF06415">
    <property type="entry name" value="iPGM_N"/>
    <property type="match status" value="1"/>
</dbReference>
<dbReference type="Pfam" id="PF01676">
    <property type="entry name" value="Metalloenzyme"/>
    <property type="match status" value="1"/>
</dbReference>
<dbReference type="PIRSF" id="PIRSF001492">
    <property type="entry name" value="IPGAM"/>
    <property type="match status" value="1"/>
</dbReference>
<dbReference type="SUPFAM" id="SSF64158">
    <property type="entry name" value="2,3-Bisphosphoglycerate-independent phosphoglycerate mutase, substrate-binding domain"/>
    <property type="match status" value="1"/>
</dbReference>
<dbReference type="SUPFAM" id="SSF53649">
    <property type="entry name" value="Alkaline phosphatase-like"/>
    <property type="match status" value="1"/>
</dbReference>
<sequence length="514" mass="56168">MSVSKKPMVLVILDGYGYREEQQDNAIFSAKTPVMDALWANRPHTLIDASGLEVGLPDRQMGNSEVGHVNLGAGRIVYQDLTRLDVEIKDRAFFANPVLTGAVDKAKNAGKAVHIMGLLSAGGVHSHEDHIMAMVELAAERGAEKIYLHAFLDGRDTPPRSAESSLKKFEEKFAALGKGRVASIIGRYYAMDRDNRWDRVEKAYDLLTLAQGEFQADTAVAGLQAAYARDENDEFVKATVIRAEGQPDAAMEDGDALIFMNFRADRAREITRAFVNADFDGFARKKVVNVDFVMLTEYAADIKTAVAYPPASLVNTFGEWMAKNDKTQLRISETEKYAHVTFFFNGGVEESFKGEDRILINSPKVATYDLQPEMSSAELTEKLVAAIKSGKYDTIICNYPNGDMVGHTGVMEAAVKAVEALDHCVEEVAKAVESVGGQLLITADHGNAEQMRDPATGQAHTAHTNLPVPLIYVGDKNVKAVEGGKLSDIAPTMLSLMGMEIPQEMTGKPLFIVE</sequence>
<reference key="1">
    <citation type="journal article" date="2007" name="J. Bacteriol.">
        <title>The genome sequence of avian pathogenic Escherichia coli strain O1:K1:H7 shares strong similarities with human extraintestinal pathogenic E. coli genomes.</title>
        <authorList>
            <person name="Johnson T.J."/>
            <person name="Kariyawasam S."/>
            <person name="Wannemuehler Y."/>
            <person name="Mangiamele P."/>
            <person name="Johnson S.J."/>
            <person name="Doetkott C."/>
            <person name="Skyberg J.A."/>
            <person name="Lynne A.M."/>
            <person name="Johnson J.R."/>
            <person name="Nolan L.K."/>
        </authorList>
    </citation>
    <scope>NUCLEOTIDE SEQUENCE [LARGE SCALE GENOMIC DNA]</scope>
</reference>
<proteinExistence type="inferred from homology"/>
<keyword id="KW-0324">Glycolysis</keyword>
<keyword id="KW-0413">Isomerase</keyword>
<keyword id="KW-0464">Manganese</keyword>
<keyword id="KW-0479">Metal-binding</keyword>
<keyword id="KW-1185">Reference proteome</keyword>
<evidence type="ECO:0000255" key="1">
    <source>
        <dbReference type="HAMAP-Rule" id="MF_01038"/>
    </source>
</evidence>